<gene>
    <name evidence="2" type="primary">argF</name>
    <name type="ordered locus">PMM1263</name>
</gene>
<comment type="function">
    <text evidence="1">Reversibly catalyzes the transfer of the carbamoyl group from carbamoyl phosphate (CP) to the N(epsilon) atom of ornithine (ORN) to produce L-citrulline.</text>
</comment>
<comment type="catalytic activity">
    <reaction evidence="2">
        <text>carbamoyl phosphate + L-ornithine = L-citrulline + phosphate + H(+)</text>
        <dbReference type="Rhea" id="RHEA:19513"/>
        <dbReference type="ChEBI" id="CHEBI:15378"/>
        <dbReference type="ChEBI" id="CHEBI:43474"/>
        <dbReference type="ChEBI" id="CHEBI:46911"/>
        <dbReference type="ChEBI" id="CHEBI:57743"/>
        <dbReference type="ChEBI" id="CHEBI:58228"/>
        <dbReference type="EC" id="2.1.3.3"/>
    </reaction>
</comment>
<comment type="pathway">
    <text evidence="2">Amino-acid biosynthesis; L-arginine biosynthesis; L-arginine from L-ornithine and carbamoyl phosphate: step 1/3.</text>
</comment>
<comment type="subcellular location">
    <subcellularLocation>
        <location evidence="2">Cytoplasm</location>
    </subcellularLocation>
</comment>
<comment type="similarity">
    <text evidence="2">Belongs to the aspartate/ornithine carbamoyltransferase superfamily. OTCase family.</text>
</comment>
<feature type="chain" id="PRO_0000112984" description="Ornithine carbamoyltransferase">
    <location>
        <begin position="1"/>
        <end position="308"/>
    </location>
</feature>
<feature type="binding site" evidence="2">
    <location>
        <begin position="55"/>
        <end position="58"/>
    </location>
    <ligand>
        <name>carbamoyl phosphate</name>
        <dbReference type="ChEBI" id="CHEBI:58228"/>
    </ligand>
</feature>
<feature type="binding site" evidence="2">
    <location>
        <position position="82"/>
    </location>
    <ligand>
        <name>carbamoyl phosphate</name>
        <dbReference type="ChEBI" id="CHEBI:58228"/>
    </ligand>
</feature>
<feature type="binding site" evidence="2">
    <location>
        <position position="106"/>
    </location>
    <ligand>
        <name>carbamoyl phosphate</name>
        <dbReference type="ChEBI" id="CHEBI:58228"/>
    </ligand>
</feature>
<feature type="binding site" evidence="2">
    <location>
        <begin position="133"/>
        <end position="136"/>
    </location>
    <ligand>
        <name>carbamoyl phosphate</name>
        <dbReference type="ChEBI" id="CHEBI:58228"/>
    </ligand>
</feature>
<feature type="binding site" evidence="2">
    <location>
        <position position="164"/>
    </location>
    <ligand>
        <name>L-ornithine</name>
        <dbReference type="ChEBI" id="CHEBI:46911"/>
    </ligand>
</feature>
<feature type="binding site" evidence="2">
    <location>
        <position position="227"/>
    </location>
    <ligand>
        <name>L-ornithine</name>
        <dbReference type="ChEBI" id="CHEBI:46911"/>
    </ligand>
</feature>
<feature type="binding site" evidence="2">
    <location>
        <begin position="231"/>
        <end position="232"/>
    </location>
    <ligand>
        <name>L-ornithine</name>
        <dbReference type="ChEBI" id="CHEBI:46911"/>
    </ligand>
</feature>
<feature type="binding site" evidence="2">
    <location>
        <begin position="267"/>
        <end position="268"/>
    </location>
    <ligand>
        <name>carbamoyl phosphate</name>
        <dbReference type="ChEBI" id="CHEBI:58228"/>
    </ligand>
</feature>
<feature type="binding site" evidence="2">
    <location>
        <position position="295"/>
    </location>
    <ligand>
        <name>carbamoyl phosphate</name>
        <dbReference type="ChEBI" id="CHEBI:58228"/>
    </ligand>
</feature>
<reference key="1">
    <citation type="journal article" date="2003" name="Nature">
        <title>Genome divergence in two Prochlorococcus ecotypes reflects oceanic niche differentiation.</title>
        <authorList>
            <person name="Rocap G."/>
            <person name="Larimer F.W."/>
            <person name="Lamerdin J.E."/>
            <person name="Malfatti S."/>
            <person name="Chain P."/>
            <person name="Ahlgren N.A."/>
            <person name="Arellano A."/>
            <person name="Coleman M."/>
            <person name="Hauser L."/>
            <person name="Hess W.R."/>
            <person name="Johnson Z.I."/>
            <person name="Land M.L."/>
            <person name="Lindell D."/>
            <person name="Post A.F."/>
            <person name="Regala W."/>
            <person name="Shah M."/>
            <person name="Shaw S.L."/>
            <person name="Steglich C."/>
            <person name="Sullivan M.B."/>
            <person name="Ting C.S."/>
            <person name="Tolonen A."/>
            <person name="Webb E.A."/>
            <person name="Zinser E.R."/>
            <person name="Chisholm S.W."/>
        </authorList>
    </citation>
    <scope>NUCLEOTIDE SEQUENCE [LARGE SCALE GENOMIC DNA]</scope>
    <source>
        <strain>CCMP1986 / NIES-2087 / MED4</strain>
    </source>
</reference>
<keyword id="KW-0028">Amino-acid biosynthesis</keyword>
<keyword id="KW-0055">Arginine biosynthesis</keyword>
<keyword id="KW-0963">Cytoplasm</keyword>
<keyword id="KW-0808">Transferase</keyword>
<protein>
    <recommendedName>
        <fullName evidence="2">Ornithine carbamoyltransferase</fullName>
        <shortName evidence="2">OTCase</shortName>
        <ecNumber evidence="2">2.1.3.3</ecNumber>
    </recommendedName>
</protein>
<dbReference type="EC" id="2.1.3.3" evidence="2"/>
<dbReference type="EMBL" id="BX548174">
    <property type="protein sequence ID" value="CAE19722.1"/>
    <property type="molecule type" value="Genomic_DNA"/>
</dbReference>
<dbReference type="RefSeq" id="WP_011132897.1">
    <property type="nucleotide sequence ID" value="NC_005072.1"/>
</dbReference>
<dbReference type="SMR" id="Q7V0J3"/>
<dbReference type="STRING" id="59919.PMM1263"/>
<dbReference type="KEGG" id="pmm:PMM1263"/>
<dbReference type="eggNOG" id="COG0078">
    <property type="taxonomic scope" value="Bacteria"/>
</dbReference>
<dbReference type="HOGENOM" id="CLU_043846_3_2_3"/>
<dbReference type="OrthoDB" id="9802587at2"/>
<dbReference type="UniPathway" id="UPA00068">
    <property type="reaction ID" value="UER00112"/>
</dbReference>
<dbReference type="Proteomes" id="UP000001026">
    <property type="component" value="Chromosome"/>
</dbReference>
<dbReference type="GO" id="GO:0005737">
    <property type="term" value="C:cytoplasm"/>
    <property type="evidence" value="ECO:0007669"/>
    <property type="project" value="UniProtKB-SubCell"/>
</dbReference>
<dbReference type="GO" id="GO:0016597">
    <property type="term" value="F:amino acid binding"/>
    <property type="evidence" value="ECO:0007669"/>
    <property type="project" value="InterPro"/>
</dbReference>
<dbReference type="GO" id="GO:0004585">
    <property type="term" value="F:ornithine carbamoyltransferase activity"/>
    <property type="evidence" value="ECO:0007669"/>
    <property type="project" value="UniProtKB-UniRule"/>
</dbReference>
<dbReference type="GO" id="GO:0042450">
    <property type="term" value="P:arginine biosynthetic process via ornithine"/>
    <property type="evidence" value="ECO:0007669"/>
    <property type="project" value="TreeGrafter"/>
</dbReference>
<dbReference type="GO" id="GO:0019240">
    <property type="term" value="P:citrulline biosynthetic process"/>
    <property type="evidence" value="ECO:0007669"/>
    <property type="project" value="TreeGrafter"/>
</dbReference>
<dbReference type="GO" id="GO:0006526">
    <property type="term" value="P:L-arginine biosynthetic process"/>
    <property type="evidence" value="ECO:0007669"/>
    <property type="project" value="UniProtKB-UniRule"/>
</dbReference>
<dbReference type="FunFam" id="3.40.50.1370:FF:000008">
    <property type="entry name" value="Ornithine carbamoyltransferase"/>
    <property type="match status" value="1"/>
</dbReference>
<dbReference type="Gene3D" id="3.40.50.1370">
    <property type="entry name" value="Aspartate/ornithine carbamoyltransferase"/>
    <property type="match status" value="2"/>
</dbReference>
<dbReference type="HAMAP" id="MF_01109">
    <property type="entry name" value="OTCase"/>
    <property type="match status" value="1"/>
</dbReference>
<dbReference type="InterPro" id="IPR006132">
    <property type="entry name" value="Asp/Orn_carbamoyltranf_P-bd"/>
</dbReference>
<dbReference type="InterPro" id="IPR006130">
    <property type="entry name" value="Asp/Orn_carbamoylTrfase"/>
</dbReference>
<dbReference type="InterPro" id="IPR036901">
    <property type="entry name" value="Asp/Orn_carbamoylTrfase_sf"/>
</dbReference>
<dbReference type="InterPro" id="IPR006131">
    <property type="entry name" value="Asp_carbamoyltransf_Asp/Orn-bd"/>
</dbReference>
<dbReference type="InterPro" id="IPR002292">
    <property type="entry name" value="Orn/put_carbamltrans"/>
</dbReference>
<dbReference type="InterPro" id="IPR024904">
    <property type="entry name" value="OTCase_ArgI"/>
</dbReference>
<dbReference type="NCBIfam" id="TIGR00658">
    <property type="entry name" value="orni_carb_tr"/>
    <property type="match status" value="1"/>
</dbReference>
<dbReference type="NCBIfam" id="NF001986">
    <property type="entry name" value="PRK00779.1"/>
    <property type="match status" value="1"/>
</dbReference>
<dbReference type="PANTHER" id="PTHR45753">
    <property type="entry name" value="ORNITHINE CARBAMOYLTRANSFERASE, MITOCHONDRIAL"/>
    <property type="match status" value="1"/>
</dbReference>
<dbReference type="PANTHER" id="PTHR45753:SF3">
    <property type="entry name" value="ORNITHINE TRANSCARBAMYLASE, MITOCHONDRIAL"/>
    <property type="match status" value="1"/>
</dbReference>
<dbReference type="Pfam" id="PF00185">
    <property type="entry name" value="OTCace"/>
    <property type="match status" value="1"/>
</dbReference>
<dbReference type="Pfam" id="PF02729">
    <property type="entry name" value="OTCace_N"/>
    <property type="match status" value="1"/>
</dbReference>
<dbReference type="PRINTS" id="PR00100">
    <property type="entry name" value="AOTCASE"/>
</dbReference>
<dbReference type="PRINTS" id="PR00102">
    <property type="entry name" value="OTCASE"/>
</dbReference>
<dbReference type="SUPFAM" id="SSF53671">
    <property type="entry name" value="Aspartate/ornithine carbamoyltransferase"/>
    <property type="match status" value="1"/>
</dbReference>
<dbReference type="PROSITE" id="PS00097">
    <property type="entry name" value="CARBAMOYLTRANSFERASE"/>
    <property type="match status" value="1"/>
</dbReference>
<sequence>MIKPNRLANKNFLSSLDITTDEVFHILDLSKKFKNKKLNINLHNKVLGLIFDKSSTRTRVSFQVAMSRLGGTTIDLNPTTSQIERGEPIKDTARVLSRYCDVIAIRTFNHADLEEYARWSTKPVINALTDLEHPCQALADFLTIYEEFLDFKDVVLTFIGDGNNVANSLILCGALLGVEVRIACPKGYEPNSMVINKAYEIYKNRNLLKITNDPDTAVLGANVLYTDVWSSMGEENQKAEKDKVFNGFTIDNDLVSKADKEAIILHCLPAYRSKEITDEVFESKKNRIFDQAENRMHVQQALLSCLLY</sequence>
<proteinExistence type="inferred from homology"/>
<organism>
    <name type="scientific">Prochlorococcus marinus subsp. pastoris (strain CCMP1986 / NIES-2087 / MED4)</name>
    <dbReference type="NCBI Taxonomy" id="59919"/>
    <lineage>
        <taxon>Bacteria</taxon>
        <taxon>Bacillati</taxon>
        <taxon>Cyanobacteriota</taxon>
        <taxon>Cyanophyceae</taxon>
        <taxon>Synechococcales</taxon>
        <taxon>Prochlorococcaceae</taxon>
        <taxon>Prochlorococcus</taxon>
    </lineage>
</organism>
<name>OTC_PROMP</name>
<evidence type="ECO:0000250" key="1"/>
<evidence type="ECO:0000255" key="2">
    <source>
        <dbReference type="HAMAP-Rule" id="MF_01109"/>
    </source>
</evidence>
<accession>Q7V0J3</accession>